<reference key="1">
    <citation type="journal article" date="2008" name="ISME J.">
        <title>Comparative genomics of two ecotypes of the marine planktonic copiotroph Alteromonas macleodii suggests alternative lifestyles associated with different kinds of particulate organic matter.</title>
        <authorList>
            <person name="Ivars-Martinez E."/>
            <person name="Martin-Cuadrado A.-B."/>
            <person name="D'Auria G."/>
            <person name="Mira A."/>
            <person name="Ferriera S."/>
            <person name="Johnson J."/>
            <person name="Friedman R."/>
            <person name="Rodriguez-Valera F."/>
        </authorList>
    </citation>
    <scope>NUCLEOTIDE SEQUENCE [LARGE SCALE GENOMIC DNA]</scope>
    <source>
        <strain>DSM 17117 / CIP 110805 / LMG 28347 / Deep ecotype</strain>
    </source>
</reference>
<proteinExistence type="inferred from homology"/>
<keyword id="KW-0012">Acyltransferase</keyword>
<keyword id="KW-0963">Cytoplasm</keyword>
<keyword id="KW-0408">Iron</keyword>
<keyword id="KW-0479">Metal-binding</keyword>
<keyword id="KW-0808">Transferase</keyword>
<keyword id="KW-0819">tRNA processing</keyword>
<protein>
    <recommendedName>
        <fullName evidence="1">tRNA N6-adenosine threonylcarbamoyltransferase</fullName>
        <ecNumber evidence="1">2.3.1.234</ecNumber>
    </recommendedName>
    <alternativeName>
        <fullName evidence="1">N6-L-threonylcarbamoyladenine synthase</fullName>
        <shortName evidence="1">t(6)A synthase</shortName>
    </alternativeName>
    <alternativeName>
        <fullName evidence="1">t(6)A37 threonylcarbamoyladenosine biosynthesis protein TsaD</fullName>
    </alternativeName>
    <alternativeName>
        <fullName evidence="1">tRNA threonylcarbamoyladenosine biosynthesis protein TsaD</fullName>
    </alternativeName>
</protein>
<accession>B4RY33</accession>
<accession>F2G993</accession>
<organism>
    <name type="scientific">Alteromonas mediterranea (strain DSM 17117 / CIP 110805 / LMG 28347 / Deep ecotype)</name>
    <dbReference type="NCBI Taxonomy" id="1774373"/>
    <lineage>
        <taxon>Bacteria</taxon>
        <taxon>Pseudomonadati</taxon>
        <taxon>Pseudomonadota</taxon>
        <taxon>Gammaproteobacteria</taxon>
        <taxon>Alteromonadales</taxon>
        <taxon>Alteromonadaceae</taxon>
        <taxon>Alteromonas/Salinimonas group</taxon>
        <taxon>Alteromonas</taxon>
    </lineage>
</organism>
<sequence length="341" mass="36452">MRILGIETSCDETGIAVYDDEKGLLSHELYSQVKLHADYGGVVPELASRDHVRKIIPLIEKAMEDANTQPSDIDGVAFTQGPGLVGALLVGSSVGRSLAYAWNVPAVGVHHMEGHLLAPMLEDDAPAFPFIALLVSGGHSMLVKVEGIGQYEVLGESIDDAAGEAFDKTAKLLGLDYPGGPLLAKLAEKGEAGHYKFPRPMTDRPGLDFSFSGLKTFAANTIRDADLTGDNAEQIKANIAYAFQEAVVDTLIIKCKRALKQTGMKRLVIAGGVSANTMLRSEMKALMQALKGEVFYPSLAYCTDNGAMIAYAGMQRLKAGETLALSSQAKPRWPLDTLSAI</sequence>
<comment type="function">
    <text evidence="1">Required for the formation of a threonylcarbamoyl group on adenosine at position 37 (t(6)A37) in tRNAs that read codons beginning with adenine. Is involved in the transfer of the threonylcarbamoyl moiety of threonylcarbamoyl-AMP (TC-AMP) to the N6 group of A37, together with TsaE and TsaB. TsaD likely plays a direct catalytic role in this reaction.</text>
</comment>
<comment type="catalytic activity">
    <reaction evidence="1">
        <text>L-threonylcarbamoyladenylate + adenosine(37) in tRNA = N(6)-L-threonylcarbamoyladenosine(37) in tRNA + AMP + H(+)</text>
        <dbReference type="Rhea" id="RHEA:37059"/>
        <dbReference type="Rhea" id="RHEA-COMP:10162"/>
        <dbReference type="Rhea" id="RHEA-COMP:10163"/>
        <dbReference type="ChEBI" id="CHEBI:15378"/>
        <dbReference type="ChEBI" id="CHEBI:73682"/>
        <dbReference type="ChEBI" id="CHEBI:74411"/>
        <dbReference type="ChEBI" id="CHEBI:74418"/>
        <dbReference type="ChEBI" id="CHEBI:456215"/>
        <dbReference type="EC" id="2.3.1.234"/>
    </reaction>
</comment>
<comment type="cofactor">
    <cofactor evidence="1">
        <name>Fe(2+)</name>
        <dbReference type="ChEBI" id="CHEBI:29033"/>
    </cofactor>
    <text evidence="1">Binds 1 Fe(2+) ion per subunit.</text>
</comment>
<comment type="subcellular location">
    <subcellularLocation>
        <location evidence="1">Cytoplasm</location>
    </subcellularLocation>
</comment>
<comment type="similarity">
    <text evidence="1">Belongs to the KAE1 / TsaD family.</text>
</comment>
<feature type="chain" id="PRO_1000145946" description="tRNA N6-adenosine threonylcarbamoyltransferase">
    <location>
        <begin position="1"/>
        <end position="341"/>
    </location>
</feature>
<feature type="binding site" evidence="1">
    <location>
        <position position="111"/>
    </location>
    <ligand>
        <name>Fe cation</name>
        <dbReference type="ChEBI" id="CHEBI:24875"/>
    </ligand>
</feature>
<feature type="binding site" evidence="1">
    <location>
        <position position="115"/>
    </location>
    <ligand>
        <name>Fe cation</name>
        <dbReference type="ChEBI" id="CHEBI:24875"/>
    </ligand>
</feature>
<feature type="binding site" evidence="1">
    <location>
        <begin position="134"/>
        <end position="138"/>
    </location>
    <ligand>
        <name>substrate</name>
    </ligand>
</feature>
<feature type="binding site" evidence="1">
    <location>
        <position position="167"/>
    </location>
    <ligand>
        <name>substrate</name>
    </ligand>
</feature>
<feature type="binding site" evidence="1">
    <location>
        <position position="180"/>
    </location>
    <ligand>
        <name>substrate</name>
    </ligand>
</feature>
<feature type="binding site" evidence="1">
    <location>
        <position position="276"/>
    </location>
    <ligand>
        <name>substrate</name>
    </ligand>
</feature>
<feature type="binding site" evidence="1">
    <location>
        <position position="304"/>
    </location>
    <ligand>
        <name>Fe cation</name>
        <dbReference type="ChEBI" id="CHEBI:24875"/>
    </ligand>
</feature>
<dbReference type="EC" id="2.3.1.234" evidence="1"/>
<dbReference type="EMBL" id="CP001103">
    <property type="protein sequence ID" value="AEA96905.1"/>
    <property type="molecule type" value="Genomic_DNA"/>
</dbReference>
<dbReference type="RefSeq" id="WP_012517259.1">
    <property type="nucleotide sequence ID" value="NC_011138.3"/>
</dbReference>
<dbReference type="SMR" id="B4RY33"/>
<dbReference type="KEGG" id="amc:MADE_1003785"/>
<dbReference type="HOGENOM" id="CLU_023208_0_2_6"/>
<dbReference type="Proteomes" id="UP000001870">
    <property type="component" value="Chromosome"/>
</dbReference>
<dbReference type="GO" id="GO:0005737">
    <property type="term" value="C:cytoplasm"/>
    <property type="evidence" value="ECO:0007669"/>
    <property type="project" value="UniProtKB-SubCell"/>
</dbReference>
<dbReference type="GO" id="GO:0005506">
    <property type="term" value="F:iron ion binding"/>
    <property type="evidence" value="ECO:0007669"/>
    <property type="project" value="UniProtKB-UniRule"/>
</dbReference>
<dbReference type="GO" id="GO:0061711">
    <property type="term" value="F:N(6)-L-threonylcarbamoyladenine synthase activity"/>
    <property type="evidence" value="ECO:0007669"/>
    <property type="project" value="UniProtKB-EC"/>
</dbReference>
<dbReference type="GO" id="GO:0002949">
    <property type="term" value="P:tRNA threonylcarbamoyladenosine modification"/>
    <property type="evidence" value="ECO:0007669"/>
    <property type="project" value="UniProtKB-UniRule"/>
</dbReference>
<dbReference type="CDD" id="cd24133">
    <property type="entry name" value="ASKHA_NBD_TsaD_bac"/>
    <property type="match status" value="1"/>
</dbReference>
<dbReference type="FunFam" id="3.30.420.40:FF:000031">
    <property type="entry name" value="tRNA N6-adenosine threonylcarbamoyltransferase"/>
    <property type="match status" value="1"/>
</dbReference>
<dbReference type="Gene3D" id="3.30.420.40">
    <property type="match status" value="2"/>
</dbReference>
<dbReference type="HAMAP" id="MF_01445">
    <property type="entry name" value="TsaD"/>
    <property type="match status" value="1"/>
</dbReference>
<dbReference type="InterPro" id="IPR043129">
    <property type="entry name" value="ATPase_NBD"/>
</dbReference>
<dbReference type="InterPro" id="IPR000905">
    <property type="entry name" value="Gcp-like_dom"/>
</dbReference>
<dbReference type="InterPro" id="IPR017861">
    <property type="entry name" value="KAE1/TsaD"/>
</dbReference>
<dbReference type="InterPro" id="IPR017860">
    <property type="entry name" value="Peptidase_M22_CS"/>
</dbReference>
<dbReference type="InterPro" id="IPR022450">
    <property type="entry name" value="TsaD"/>
</dbReference>
<dbReference type="NCBIfam" id="TIGR00329">
    <property type="entry name" value="gcp_kae1"/>
    <property type="match status" value="1"/>
</dbReference>
<dbReference type="NCBIfam" id="TIGR03723">
    <property type="entry name" value="T6A_TsaD_YgjD"/>
    <property type="match status" value="1"/>
</dbReference>
<dbReference type="PANTHER" id="PTHR11735">
    <property type="entry name" value="TRNA N6-ADENOSINE THREONYLCARBAMOYLTRANSFERASE"/>
    <property type="match status" value="1"/>
</dbReference>
<dbReference type="PANTHER" id="PTHR11735:SF6">
    <property type="entry name" value="TRNA N6-ADENOSINE THREONYLCARBAMOYLTRANSFERASE, MITOCHONDRIAL"/>
    <property type="match status" value="1"/>
</dbReference>
<dbReference type="Pfam" id="PF00814">
    <property type="entry name" value="TsaD"/>
    <property type="match status" value="1"/>
</dbReference>
<dbReference type="PRINTS" id="PR00789">
    <property type="entry name" value="OSIALOPTASE"/>
</dbReference>
<dbReference type="SUPFAM" id="SSF53067">
    <property type="entry name" value="Actin-like ATPase domain"/>
    <property type="match status" value="2"/>
</dbReference>
<dbReference type="PROSITE" id="PS01016">
    <property type="entry name" value="GLYCOPROTEASE"/>
    <property type="match status" value="1"/>
</dbReference>
<name>TSAD_ALTMD</name>
<evidence type="ECO:0000255" key="1">
    <source>
        <dbReference type="HAMAP-Rule" id="MF_01445"/>
    </source>
</evidence>
<gene>
    <name evidence="1" type="primary">tsaD</name>
    <name type="synonym">gcp</name>
    <name type="ordered locus">MADE_1003785</name>
</gene>